<name>DEXH4_ARATH</name>
<evidence type="ECO:0000255" key="1"/>
<evidence type="ECO:0000255" key="2">
    <source>
        <dbReference type="PROSITE-ProRule" id="PRU00541"/>
    </source>
</evidence>
<evidence type="ECO:0000255" key="3">
    <source>
        <dbReference type="PROSITE-ProRule" id="PRU00542"/>
    </source>
</evidence>
<evidence type="ECO:0000256" key="4">
    <source>
        <dbReference type="SAM" id="MobiDB-lite"/>
    </source>
</evidence>
<evidence type="ECO:0000305" key="5"/>
<evidence type="ECO:0000312" key="6">
    <source>
        <dbReference type="Araport" id="AT1G58050"/>
    </source>
</evidence>
<evidence type="ECO:0000312" key="7">
    <source>
        <dbReference type="EMBL" id="AAG50700.1"/>
    </source>
</evidence>
<gene>
    <name evidence="6" type="ordered locus">At1g58050</name>
    <name evidence="7" type="ORF">T15M6.6</name>
</gene>
<dbReference type="EC" id="3.6.4.13" evidence="5"/>
<dbReference type="EMBL" id="AC079604">
    <property type="protein sequence ID" value="AAG50700.1"/>
    <property type="molecule type" value="Genomic_DNA"/>
</dbReference>
<dbReference type="EMBL" id="CP002684">
    <property type="protein sequence ID" value="AEE33491.1"/>
    <property type="molecule type" value="Genomic_DNA"/>
</dbReference>
<dbReference type="PIR" id="F96613">
    <property type="entry name" value="F96613"/>
</dbReference>
<dbReference type="RefSeq" id="NP_176102.1">
    <property type="nucleotide sequence ID" value="NM_104587.1"/>
</dbReference>
<dbReference type="SMR" id="Q9C6G0"/>
<dbReference type="FunCoup" id="Q9C6G0">
    <property type="interactions" value="3375"/>
</dbReference>
<dbReference type="STRING" id="3702.Q9C6G0"/>
<dbReference type="GlyGen" id="Q9C6G0">
    <property type="glycosylation" value="1 site"/>
</dbReference>
<dbReference type="iPTMnet" id="Q9C6G0"/>
<dbReference type="PaxDb" id="3702-AT1G58050.1"/>
<dbReference type="ProteomicsDB" id="224130"/>
<dbReference type="EnsemblPlants" id="AT1G58050.1">
    <property type="protein sequence ID" value="AT1G58050.1"/>
    <property type="gene ID" value="AT1G58050"/>
</dbReference>
<dbReference type="GeneID" id="842172"/>
<dbReference type="Gramene" id="AT1G58050.1">
    <property type="protein sequence ID" value="AT1G58050.1"/>
    <property type="gene ID" value="AT1G58050"/>
</dbReference>
<dbReference type="KEGG" id="ath:AT1G58050"/>
<dbReference type="Araport" id="AT1G58050"/>
<dbReference type="TAIR" id="AT1G58050"/>
<dbReference type="eggNOG" id="KOG0920">
    <property type="taxonomic scope" value="Eukaryota"/>
</dbReference>
<dbReference type="HOGENOM" id="CLU_001832_1_4_1"/>
<dbReference type="InParanoid" id="Q9C6G0"/>
<dbReference type="OMA" id="IMRELCN"/>
<dbReference type="PhylomeDB" id="Q9C6G0"/>
<dbReference type="PRO" id="PR:Q9C6G0"/>
<dbReference type="Proteomes" id="UP000006548">
    <property type="component" value="Chromosome 1"/>
</dbReference>
<dbReference type="ExpressionAtlas" id="Q9C6G0">
    <property type="expression patterns" value="baseline and differential"/>
</dbReference>
<dbReference type="GO" id="GO:0009507">
    <property type="term" value="C:chloroplast"/>
    <property type="evidence" value="ECO:0007669"/>
    <property type="project" value="UniProtKB-SubCell"/>
</dbReference>
<dbReference type="GO" id="GO:0005524">
    <property type="term" value="F:ATP binding"/>
    <property type="evidence" value="ECO:0007669"/>
    <property type="project" value="UniProtKB-KW"/>
</dbReference>
<dbReference type="GO" id="GO:0016887">
    <property type="term" value="F:ATP hydrolysis activity"/>
    <property type="evidence" value="ECO:0007669"/>
    <property type="project" value="RHEA"/>
</dbReference>
<dbReference type="GO" id="GO:0003723">
    <property type="term" value="F:RNA binding"/>
    <property type="evidence" value="ECO:0007669"/>
    <property type="project" value="UniProtKB-KW"/>
</dbReference>
<dbReference type="GO" id="GO:0003724">
    <property type="term" value="F:RNA helicase activity"/>
    <property type="evidence" value="ECO:0007669"/>
    <property type="project" value="UniProtKB-EC"/>
</dbReference>
<dbReference type="CDD" id="cd17917">
    <property type="entry name" value="DEXHc_RHA-like"/>
    <property type="match status" value="1"/>
</dbReference>
<dbReference type="CDD" id="cd18791">
    <property type="entry name" value="SF2_C_RHA"/>
    <property type="match status" value="1"/>
</dbReference>
<dbReference type="FunFam" id="3.40.50.300:FF:000819">
    <property type="entry name" value="ATP dependent RNA helicase, putative"/>
    <property type="match status" value="1"/>
</dbReference>
<dbReference type="FunFam" id="3.40.50.300:FF:000500">
    <property type="entry name" value="ATP-dependent RNA helicase DHX29"/>
    <property type="match status" value="1"/>
</dbReference>
<dbReference type="FunFam" id="1.20.120.1080:FF:000002">
    <property type="entry name" value="Putative ATP-dependent RNA helicase DHX36"/>
    <property type="match status" value="1"/>
</dbReference>
<dbReference type="Gene3D" id="1.20.120.1080">
    <property type="match status" value="1"/>
</dbReference>
<dbReference type="Gene3D" id="3.40.50.300">
    <property type="entry name" value="P-loop containing nucleotide triphosphate hydrolases"/>
    <property type="match status" value="2"/>
</dbReference>
<dbReference type="InterPro" id="IPR011709">
    <property type="entry name" value="DEAD-box_helicase_OB_fold"/>
</dbReference>
<dbReference type="InterPro" id="IPR011545">
    <property type="entry name" value="DEAD/DEAH_box_helicase_dom"/>
</dbReference>
<dbReference type="InterPro" id="IPR048333">
    <property type="entry name" value="HA2_WH"/>
</dbReference>
<dbReference type="InterPro" id="IPR007502">
    <property type="entry name" value="Helicase-assoc_dom"/>
</dbReference>
<dbReference type="InterPro" id="IPR014001">
    <property type="entry name" value="Helicase_ATP-bd"/>
</dbReference>
<dbReference type="InterPro" id="IPR001650">
    <property type="entry name" value="Helicase_C-like"/>
</dbReference>
<dbReference type="InterPro" id="IPR027417">
    <property type="entry name" value="P-loop_NTPase"/>
</dbReference>
<dbReference type="InterPro" id="IPR056890">
    <property type="entry name" value="UBA_DHX29-like"/>
</dbReference>
<dbReference type="PANTHER" id="PTHR18934">
    <property type="entry name" value="ATP-DEPENDENT RNA HELICASE"/>
    <property type="match status" value="1"/>
</dbReference>
<dbReference type="PANTHER" id="PTHR18934:SF246">
    <property type="entry name" value="DEXH-BOX ATP-DEPENDENT RNA HELICASE DEXH4, CHLOROPLASTIC-RELATED"/>
    <property type="match status" value="1"/>
</dbReference>
<dbReference type="Pfam" id="PF00270">
    <property type="entry name" value="DEAD"/>
    <property type="match status" value="1"/>
</dbReference>
<dbReference type="Pfam" id="PF21010">
    <property type="entry name" value="HA2_C"/>
    <property type="match status" value="1"/>
</dbReference>
<dbReference type="Pfam" id="PF04408">
    <property type="entry name" value="HA2_N"/>
    <property type="match status" value="1"/>
</dbReference>
<dbReference type="Pfam" id="PF00271">
    <property type="entry name" value="Helicase_C"/>
    <property type="match status" value="1"/>
</dbReference>
<dbReference type="Pfam" id="PF07717">
    <property type="entry name" value="OB_NTP_bind"/>
    <property type="match status" value="1"/>
</dbReference>
<dbReference type="Pfam" id="PF24899">
    <property type="entry name" value="UBA_DHX29"/>
    <property type="match status" value="1"/>
</dbReference>
<dbReference type="SMART" id="SM00487">
    <property type="entry name" value="DEXDc"/>
    <property type="match status" value="1"/>
</dbReference>
<dbReference type="SMART" id="SM00847">
    <property type="entry name" value="HA2"/>
    <property type="match status" value="1"/>
</dbReference>
<dbReference type="SMART" id="SM00490">
    <property type="entry name" value="HELICc"/>
    <property type="match status" value="1"/>
</dbReference>
<dbReference type="SUPFAM" id="SSF52540">
    <property type="entry name" value="P-loop containing nucleoside triphosphate hydrolases"/>
    <property type="match status" value="1"/>
</dbReference>
<dbReference type="PROSITE" id="PS51192">
    <property type="entry name" value="HELICASE_ATP_BIND_1"/>
    <property type="match status" value="1"/>
</dbReference>
<dbReference type="PROSITE" id="PS51194">
    <property type="entry name" value="HELICASE_CTER"/>
    <property type="match status" value="1"/>
</dbReference>
<comment type="catalytic activity">
    <reaction evidence="5">
        <text>ATP + H2O = ADP + phosphate + H(+)</text>
        <dbReference type="Rhea" id="RHEA:13065"/>
        <dbReference type="ChEBI" id="CHEBI:15377"/>
        <dbReference type="ChEBI" id="CHEBI:15378"/>
        <dbReference type="ChEBI" id="CHEBI:30616"/>
        <dbReference type="ChEBI" id="CHEBI:43474"/>
        <dbReference type="ChEBI" id="CHEBI:456216"/>
        <dbReference type="EC" id="3.6.4.13"/>
    </reaction>
</comment>
<comment type="subcellular location">
    <subcellularLocation>
        <location evidence="1">Plastid</location>
        <location evidence="1">Chloroplast</location>
    </subcellularLocation>
</comment>
<comment type="similarity">
    <text evidence="5">Belongs to the DExH box helicase family.</text>
</comment>
<protein>
    <recommendedName>
        <fullName evidence="5">DExH-box ATP-dependent RNA helicase DExH4, chloroplastic</fullName>
        <ecNumber evidence="5">3.6.4.13</ecNumber>
    </recommendedName>
</protein>
<keyword id="KW-0067">ATP-binding</keyword>
<keyword id="KW-0150">Chloroplast</keyword>
<keyword id="KW-0347">Helicase</keyword>
<keyword id="KW-0378">Hydrolase</keyword>
<keyword id="KW-0547">Nucleotide-binding</keyword>
<keyword id="KW-0934">Plastid</keyword>
<keyword id="KW-1185">Reference proteome</keyword>
<keyword id="KW-0694">RNA-binding</keyword>
<keyword id="KW-0809">Transit peptide</keyword>
<proteinExistence type="inferred from homology"/>
<feature type="transit peptide" description="Chloroplast" evidence="1">
    <location>
        <begin position="1"/>
        <end position="61"/>
    </location>
</feature>
<feature type="chain" id="PRO_0000435294" description="DExH-box ATP-dependent RNA helicase DExH4, chloroplastic">
    <location>
        <begin position="62"/>
        <end position="1417"/>
    </location>
</feature>
<feature type="domain" description="Helicase ATP-binding" evidence="2">
    <location>
        <begin position="607"/>
        <end position="781"/>
    </location>
</feature>
<feature type="domain" description="Helicase C-terminal" evidence="3">
    <location>
        <begin position="868"/>
        <end position="1043"/>
    </location>
</feature>
<feature type="region of interest" description="Disordered" evidence="4">
    <location>
        <begin position="1"/>
        <end position="37"/>
    </location>
</feature>
<feature type="short sequence motif" description="DEIH box" evidence="5">
    <location>
        <begin position="722"/>
        <end position="725"/>
    </location>
</feature>
<feature type="compositionally biased region" description="Basic residues" evidence="4">
    <location>
        <begin position="1"/>
        <end position="12"/>
    </location>
</feature>
<feature type="binding site" evidence="2">
    <location>
        <begin position="620"/>
        <end position="627"/>
    </location>
    <ligand>
        <name>ATP</name>
        <dbReference type="ChEBI" id="CHEBI:30616"/>
    </ligand>
</feature>
<organism>
    <name type="scientific">Arabidopsis thaliana</name>
    <name type="common">Mouse-ear cress</name>
    <dbReference type="NCBI Taxonomy" id="3702"/>
    <lineage>
        <taxon>Eukaryota</taxon>
        <taxon>Viridiplantae</taxon>
        <taxon>Streptophyta</taxon>
        <taxon>Embryophyta</taxon>
        <taxon>Tracheophyta</taxon>
        <taxon>Spermatophyta</taxon>
        <taxon>Magnoliopsida</taxon>
        <taxon>eudicotyledons</taxon>
        <taxon>Gunneridae</taxon>
        <taxon>Pentapetalae</taxon>
        <taxon>rosids</taxon>
        <taxon>malvids</taxon>
        <taxon>Brassicales</taxon>
        <taxon>Brassicaceae</taxon>
        <taxon>Camelineae</taxon>
        <taxon>Arabidopsis</taxon>
    </lineage>
</organism>
<accession>Q9C6G0</accession>
<sequence length="1417" mass="159339">MAPTKKPQKNKQSKNEIASSLIPNSGHKKPSKAPKLLISPENEDRLRRLLLNFRRTPSPVTATLSVTQKRKKLNNLYENLSCEGFLDNQIELVLSSLRDGATLETALDWLCLNLPSHELPVNFSNGASRFPSTGRSVAVISKSKKDWNVSAESSVQEVKEVPESEVLVRVKSKRDEEEEDSLSSCQPSQADWIHQYMKRLEEEELESSDDERDKVSGPRSFEVIAKEYCVERYNAIKAKRKGDKSGQSQAGLAICKLKEEMNALGPSEAILESEFQRDRQDCEGAREKEVASSVLDDVHESVNADAFFFQLFDDLTLDTNPVGSCKSEEQESVVSNDSLDDLDLGDLFDEDVPPYVPSPHELLELQKKEIMRELCNEKHLTKLNGIWKKGEAQKIPKALLHQLCQRSGWIAPKFNKVTGEGRNFSYTTSVMRKSSGFGKSRQAGGLVTIQLPHQVEDFESIQDAQNRVAAFALHKLFSDLPVHFAITEPYASLVLIWKQEESLGITSREEQRREKFVESLLEADNFSLTTTSRGIHSALPMVDSCVKENDDLDVVKSNHRARRNSSMAAECSSLKQKQENKKKMQKYKDMLKTRAALPISEVKKDILQKLKEKDVLVVCGETGSGKTTQVPQFILDDMIDSGHGGYCNIICTQPRAITVAQRVADERCEPPPGFDNSVVAYQVRHQNARSDKTRLLFCTTGILLRKLVGDTTLKDVTHIIVDEVHERSLMGDFLLIILKSLIEKQSWDNALPKLKVILMSATVDAHQFSRYFGQCPIITAQGRTHPVTTYFLEDIYERTKYLLASDSPAALSSDTSITDKLGSVNVPRGKKNLMLAGWGDSYLVSEDSLNTSYDSIKYIASAVVDYDLLEELICHIDDTCEEGAILVFLPGMSEINMLLNRLAASYRFRGASGDWLLPLHSSIASTEQKKVFLRPPKGIRKVIIATNIAETSITIEDVVYVIDSGKHKENRYNPHKKLSSMVEDWVSKANARQRMGRAGRVKPGHCFSLYTRHRFEKLMRPYQVPEMLRVPLVELCLHIKLLGLGQIKPFLSKALEPPSESAINSAILLLHKVGALEGDEELTPLGHHLAKLPVDLLIGKMLLYGGIFGCLSPILSIAAFLSCCKSPFVYAKDEQNVDRVKLALLSDKLESSSNLNNNDRQSDHLLMVVAYEKWVRILHEQGFKAAESFCESKFLNSSVMRMMRERRVEFGMLLADIGLINLPKGKGRRKENFDVWFSDKTQPFNMYSQEPEVVKAILCAGLCPNIAEGLVNRLTKPAEETQRYAVWHDGKREVHIHRNSINKNCKAFQYPFIVFLEKLETKKVVYLQDTTVVSPFSILLFGGSINVHHQSGSVTIDGWLKLTAPAQTAVLFKELRLTLHSILKDLIRKPEKSGIVHNEVVKSMVHLLIEEGKPQHT</sequence>
<reference key="1">
    <citation type="journal article" date="2000" name="Nature">
        <title>Sequence and analysis of chromosome 1 of the plant Arabidopsis thaliana.</title>
        <authorList>
            <person name="Theologis A."/>
            <person name="Ecker J.R."/>
            <person name="Palm C.J."/>
            <person name="Federspiel N.A."/>
            <person name="Kaul S."/>
            <person name="White O."/>
            <person name="Alonso J."/>
            <person name="Altafi H."/>
            <person name="Araujo R."/>
            <person name="Bowman C.L."/>
            <person name="Brooks S.Y."/>
            <person name="Buehler E."/>
            <person name="Chan A."/>
            <person name="Chao Q."/>
            <person name="Chen H."/>
            <person name="Cheuk R.F."/>
            <person name="Chin C.W."/>
            <person name="Chung M.K."/>
            <person name="Conn L."/>
            <person name="Conway A.B."/>
            <person name="Conway A.R."/>
            <person name="Creasy T.H."/>
            <person name="Dewar K."/>
            <person name="Dunn P."/>
            <person name="Etgu P."/>
            <person name="Feldblyum T.V."/>
            <person name="Feng J.-D."/>
            <person name="Fong B."/>
            <person name="Fujii C.Y."/>
            <person name="Gill J.E."/>
            <person name="Goldsmith A.D."/>
            <person name="Haas B."/>
            <person name="Hansen N.F."/>
            <person name="Hughes B."/>
            <person name="Huizar L."/>
            <person name="Hunter J.L."/>
            <person name="Jenkins J."/>
            <person name="Johnson-Hopson C."/>
            <person name="Khan S."/>
            <person name="Khaykin E."/>
            <person name="Kim C.J."/>
            <person name="Koo H.L."/>
            <person name="Kremenetskaia I."/>
            <person name="Kurtz D.B."/>
            <person name="Kwan A."/>
            <person name="Lam B."/>
            <person name="Langin-Hooper S."/>
            <person name="Lee A."/>
            <person name="Lee J.M."/>
            <person name="Lenz C.A."/>
            <person name="Li J.H."/>
            <person name="Li Y.-P."/>
            <person name="Lin X."/>
            <person name="Liu S.X."/>
            <person name="Liu Z.A."/>
            <person name="Luros J.S."/>
            <person name="Maiti R."/>
            <person name="Marziali A."/>
            <person name="Militscher J."/>
            <person name="Miranda M."/>
            <person name="Nguyen M."/>
            <person name="Nierman W.C."/>
            <person name="Osborne B.I."/>
            <person name="Pai G."/>
            <person name="Peterson J."/>
            <person name="Pham P.K."/>
            <person name="Rizzo M."/>
            <person name="Rooney T."/>
            <person name="Rowley D."/>
            <person name="Sakano H."/>
            <person name="Salzberg S.L."/>
            <person name="Schwartz J.R."/>
            <person name="Shinn P."/>
            <person name="Southwick A.M."/>
            <person name="Sun H."/>
            <person name="Tallon L.J."/>
            <person name="Tambunga G."/>
            <person name="Toriumi M.J."/>
            <person name="Town C.D."/>
            <person name="Utterback T."/>
            <person name="Van Aken S."/>
            <person name="Vaysberg M."/>
            <person name="Vysotskaia V.S."/>
            <person name="Walker M."/>
            <person name="Wu D."/>
            <person name="Yu G."/>
            <person name="Fraser C.M."/>
            <person name="Venter J.C."/>
            <person name="Davis R.W."/>
        </authorList>
    </citation>
    <scope>NUCLEOTIDE SEQUENCE [LARGE SCALE GENOMIC DNA]</scope>
    <source>
        <strain>cv. Columbia</strain>
    </source>
</reference>
<reference key="2">
    <citation type="journal article" date="2017" name="Plant J.">
        <title>Araport11: a complete reannotation of the Arabidopsis thaliana reference genome.</title>
        <authorList>
            <person name="Cheng C.Y."/>
            <person name="Krishnakumar V."/>
            <person name="Chan A.P."/>
            <person name="Thibaud-Nissen F."/>
            <person name="Schobel S."/>
            <person name="Town C.D."/>
        </authorList>
    </citation>
    <scope>GENOME REANNOTATION</scope>
    <source>
        <strain>cv. Columbia</strain>
    </source>
</reference>
<reference key="3">
    <citation type="journal article" date="2013" name="PLoS ONE">
        <title>Genome-wide comparative in silico analysis of the RNA helicase gene family in Zea mays and Glycine max: a comparison with Arabidopsis and Oryza sativa.</title>
        <authorList>
            <person name="Xu R."/>
            <person name="Zhang S."/>
            <person name="Huang J."/>
            <person name="Zheng C."/>
        </authorList>
    </citation>
    <scope>GENE FAMILY</scope>
</reference>